<sequence length="188" mass="21124">MTIKSDKWIKKMSQEHNMIEPFEAGQVKVINNQKIVSYGTSSYGYDVRCADEFKIFTNINSSIVDPKNFNDKNFVDFKGDVCIIPPNSFALARTVEKFKIPRDTLVVCLGKSTYARCGIIVNVTPLEPEWEGYVTLEFSNTTPLPAKIYANEGVAQMLFFQSDEECETSYADKGGKYQGQVGVTLPKC</sequence>
<keyword id="KW-0378">Hydrolase</keyword>
<keyword id="KW-0546">Nucleotide metabolism</keyword>
<keyword id="KW-0547">Nucleotide-binding</keyword>
<proteinExistence type="inferred from homology"/>
<comment type="function">
    <text evidence="1">Catalyzes the deamination of dCTP to dUTP.</text>
</comment>
<comment type="catalytic activity">
    <reaction evidence="1">
        <text>dCTP + H2O + H(+) = dUTP + NH4(+)</text>
        <dbReference type="Rhea" id="RHEA:22680"/>
        <dbReference type="ChEBI" id="CHEBI:15377"/>
        <dbReference type="ChEBI" id="CHEBI:15378"/>
        <dbReference type="ChEBI" id="CHEBI:28938"/>
        <dbReference type="ChEBI" id="CHEBI:61481"/>
        <dbReference type="ChEBI" id="CHEBI:61555"/>
        <dbReference type="EC" id="3.5.4.13"/>
    </reaction>
</comment>
<comment type="pathway">
    <text evidence="1">Pyrimidine metabolism; dUMP biosynthesis; dUMP from dCTP (dUTP route): step 1/2.</text>
</comment>
<comment type="subunit">
    <text evidence="1">Homotrimer.</text>
</comment>
<comment type="similarity">
    <text evidence="1">Belongs to the dCTP deaminase family.</text>
</comment>
<reference key="1">
    <citation type="journal article" date="2009" name="PLoS ONE">
        <title>Complete genome sequence of Francisella tularensis subspecies holarctica FTNF002-00.</title>
        <authorList>
            <person name="Barabote R.D."/>
            <person name="Xie G."/>
            <person name="Brettin T.S."/>
            <person name="Hinrichs S.H."/>
            <person name="Fey P.D."/>
            <person name="Jay J.J."/>
            <person name="Engle J.L."/>
            <person name="Godbole S.D."/>
            <person name="Noronha J.M."/>
            <person name="Scheuermann R.H."/>
            <person name="Zhou L.W."/>
            <person name="Lion C."/>
            <person name="Dempsey M.P."/>
        </authorList>
    </citation>
    <scope>NUCLEOTIDE SEQUENCE [LARGE SCALE GENOMIC DNA]</scope>
    <source>
        <strain>FTNF002-00 / FTA</strain>
    </source>
</reference>
<dbReference type="EC" id="3.5.4.13" evidence="1"/>
<dbReference type="EMBL" id="CP000803">
    <property type="protein sequence ID" value="ABU61752.1"/>
    <property type="molecule type" value="Genomic_DNA"/>
</dbReference>
<dbReference type="RefSeq" id="WP_003016296.1">
    <property type="nucleotide sequence ID" value="NC_009749.1"/>
</dbReference>
<dbReference type="SMR" id="A7NCP9"/>
<dbReference type="GeneID" id="75265387"/>
<dbReference type="KEGG" id="fta:FTA_1277"/>
<dbReference type="HOGENOM" id="CLU_087476_4_0_6"/>
<dbReference type="UniPathway" id="UPA00610">
    <property type="reaction ID" value="UER00665"/>
</dbReference>
<dbReference type="GO" id="GO:0008829">
    <property type="term" value="F:dCTP deaminase activity"/>
    <property type="evidence" value="ECO:0007669"/>
    <property type="project" value="UniProtKB-UniRule"/>
</dbReference>
<dbReference type="GO" id="GO:0000166">
    <property type="term" value="F:nucleotide binding"/>
    <property type="evidence" value="ECO:0007669"/>
    <property type="project" value="UniProtKB-KW"/>
</dbReference>
<dbReference type="GO" id="GO:0006226">
    <property type="term" value="P:dUMP biosynthetic process"/>
    <property type="evidence" value="ECO:0007669"/>
    <property type="project" value="UniProtKB-UniPathway"/>
</dbReference>
<dbReference type="GO" id="GO:0006229">
    <property type="term" value="P:dUTP biosynthetic process"/>
    <property type="evidence" value="ECO:0007669"/>
    <property type="project" value="UniProtKB-UniRule"/>
</dbReference>
<dbReference type="GO" id="GO:0015949">
    <property type="term" value="P:nucleobase-containing small molecule interconversion"/>
    <property type="evidence" value="ECO:0007669"/>
    <property type="project" value="TreeGrafter"/>
</dbReference>
<dbReference type="CDD" id="cd07557">
    <property type="entry name" value="trimeric_dUTPase"/>
    <property type="match status" value="1"/>
</dbReference>
<dbReference type="FunFam" id="2.70.40.10:FF:000001">
    <property type="entry name" value="dCTP deaminase"/>
    <property type="match status" value="1"/>
</dbReference>
<dbReference type="Gene3D" id="2.70.40.10">
    <property type="match status" value="1"/>
</dbReference>
<dbReference type="HAMAP" id="MF_00146">
    <property type="entry name" value="dCTP_deaminase"/>
    <property type="match status" value="1"/>
</dbReference>
<dbReference type="InterPro" id="IPR011962">
    <property type="entry name" value="dCTP_deaminase"/>
</dbReference>
<dbReference type="InterPro" id="IPR036157">
    <property type="entry name" value="dUTPase-like_sf"/>
</dbReference>
<dbReference type="InterPro" id="IPR033704">
    <property type="entry name" value="dUTPase_trimeric"/>
</dbReference>
<dbReference type="NCBIfam" id="TIGR02274">
    <property type="entry name" value="dCTP_deam"/>
    <property type="match status" value="1"/>
</dbReference>
<dbReference type="PANTHER" id="PTHR42680">
    <property type="entry name" value="DCTP DEAMINASE"/>
    <property type="match status" value="1"/>
</dbReference>
<dbReference type="PANTHER" id="PTHR42680:SF3">
    <property type="entry name" value="DCTP DEAMINASE"/>
    <property type="match status" value="1"/>
</dbReference>
<dbReference type="Pfam" id="PF22769">
    <property type="entry name" value="DCD"/>
    <property type="match status" value="1"/>
</dbReference>
<dbReference type="SUPFAM" id="SSF51283">
    <property type="entry name" value="dUTPase-like"/>
    <property type="match status" value="1"/>
</dbReference>
<feature type="chain" id="PRO_1000009724" description="dCTP deaminase">
    <location>
        <begin position="1"/>
        <end position="188"/>
    </location>
</feature>
<feature type="active site" description="Proton donor/acceptor" evidence="1">
    <location>
        <position position="137"/>
    </location>
</feature>
<feature type="binding site" evidence="1">
    <location>
        <begin position="111"/>
        <end position="116"/>
    </location>
    <ligand>
        <name>dCTP</name>
        <dbReference type="ChEBI" id="CHEBI:61481"/>
    </ligand>
</feature>
<feature type="binding site" evidence="1">
    <location>
        <begin position="135"/>
        <end position="137"/>
    </location>
    <ligand>
        <name>dCTP</name>
        <dbReference type="ChEBI" id="CHEBI:61481"/>
    </ligand>
</feature>
<feature type="binding site" evidence="1">
    <location>
        <position position="156"/>
    </location>
    <ligand>
        <name>dCTP</name>
        <dbReference type="ChEBI" id="CHEBI:61481"/>
    </ligand>
</feature>
<feature type="binding site" evidence="1">
    <location>
        <position position="170"/>
    </location>
    <ligand>
        <name>dCTP</name>
        <dbReference type="ChEBI" id="CHEBI:61481"/>
    </ligand>
</feature>
<feature type="binding site" evidence="1">
    <location>
        <position position="180"/>
    </location>
    <ligand>
        <name>dCTP</name>
        <dbReference type="ChEBI" id="CHEBI:61481"/>
    </ligand>
</feature>
<name>DCD_FRATF</name>
<organism>
    <name type="scientific">Francisella tularensis subsp. holarctica (strain FTNF002-00 / FTA)</name>
    <dbReference type="NCBI Taxonomy" id="458234"/>
    <lineage>
        <taxon>Bacteria</taxon>
        <taxon>Pseudomonadati</taxon>
        <taxon>Pseudomonadota</taxon>
        <taxon>Gammaproteobacteria</taxon>
        <taxon>Thiotrichales</taxon>
        <taxon>Francisellaceae</taxon>
        <taxon>Francisella</taxon>
    </lineage>
</organism>
<gene>
    <name evidence="1" type="primary">dcd</name>
    <name type="ordered locus">FTA_1277</name>
</gene>
<evidence type="ECO:0000255" key="1">
    <source>
        <dbReference type="HAMAP-Rule" id="MF_00146"/>
    </source>
</evidence>
<protein>
    <recommendedName>
        <fullName evidence="1">dCTP deaminase</fullName>
        <ecNumber evidence="1">3.5.4.13</ecNumber>
    </recommendedName>
    <alternativeName>
        <fullName evidence="1">Deoxycytidine triphosphate deaminase</fullName>
    </alternativeName>
</protein>
<accession>A7NCP9</accession>